<proteinExistence type="inferred from homology"/>
<accession>B2ICL0</accession>
<dbReference type="EC" id="4.3.2.10" evidence="1"/>
<dbReference type="EMBL" id="CP001016">
    <property type="protein sequence ID" value="ACB93899.1"/>
    <property type="molecule type" value="Genomic_DNA"/>
</dbReference>
<dbReference type="RefSeq" id="WP_012383257.1">
    <property type="nucleotide sequence ID" value="NC_010581.1"/>
</dbReference>
<dbReference type="SMR" id="B2ICL0"/>
<dbReference type="STRING" id="395963.Bind_0243"/>
<dbReference type="KEGG" id="bid:Bind_0243"/>
<dbReference type="eggNOG" id="COG0107">
    <property type="taxonomic scope" value="Bacteria"/>
</dbReference>
<dbReference type="HOGENOM" id="CLU_048577_4_0_5"/>
<dbReference type="OrthoDB" id="9781903at2"/>
<dbReference type="UniPathway" id="UPA00031">
    <property type="reaction ID" value="UER00010"/>
</dbReference>
<dbReference type="Proteomes" id="UP000001695">
    <property type="component" value="Chromosome"/>
</dbReference>
<dbReference type="GO" id="GO:0005737">
    <property type="term" value="C:cytoplasm"/>
    <property type="evidence" value="ECO:0007669"/>
    <property type="project" value="UniProtKB-SubCell"/>
</dbReference>
<dbReference type="GO" id="GO:0000107">
    <property type="term" value="F:imidazoleglycerol-phosphate synthase activity"/>
    <property type="evidence" value="ECO:0007669"/>
    <property type="project" value="UniProtKB-UniRule"/>
</dbReference>
<dbReference type="GO" id="GO:0016829">
    <property type="term" value="F:lyase activity"/>
    <property type="evidence" value="ECO:0007669"/>
    <property type="project" value="UniProtKB-KW"/>
</dbReference>
<dbReference type="GO" id="GO:0000105">
    <property type="term" value="P:L-histidine biosynthetic process"/>
    <property type="evidence" value="ECO:0007669"/>
    <property type="project" value="UniProtKB-UniRule"/>
</dbReference>
<dbReference type="CDD" id="cd04731">
    <property type="entry name" value="HisF"/>
    <property type="match status" value="1"/>
</dbReference>
<dbReference type="FunFam" id="3.20.20.70:FF:000006">
    <property type="entry name" value="Imidazole glycerol phosphate synthase subunit HisF"/>
    <property type="match status" value="1"/>
</dbReference>
<dbReference type="Gene3D" id="3.20.20.70">
    <property type="entry name" value="Aldolase class I"/>
    <property type="match status" value="1"/>
</dbReference>
<dbReference type="HAMAP" id="MF_01013">
    <property type="entry name" value="HisF"/>
    <property type="match status" value="1"/>
</dbReference>
<dbReference type="InterPro" id="IPR013785">
    <property type="entry name" value="Aldolase_TIM"/>
</dbReference>
<dbReference type="InterPro" id="IPR006062">
    <property type="entry name" value="His_biosynth"/>
</dbReference>
<dbReference type="InterPro" id="IPR004651">
    <property type="entry name" value="HisF"/>
</dbReference>
<dbReference type="InterPro" id="IPR050064">
    <property type="entry name" value="IGPS_HisA/HisF"/>
</dbReference>
<dbReference type="InterPro" id="IPR011060">
    <property type="entry name" value="RibuloseP-bd_barrel"/>
</dbReference>
<dbReference type="NCBIfam" id="TIGR00735">
    <property type="entry name" value="hisF"/>
    <property type="match status" value="1"/>
</dbReference>
<dbReference type="PANTHER" id="PTHR21235:SF2">
    <property type="entry name" value="IMIDAZOLE GLYCEROL PHOSPHATE SYNTHASE HISHF"/>
    <property type="match status" value="1"/>
</dbReference>
<dbReference type="PANTHER" id="PTHR21235">
    <property type="entry name" value="IMIDAZOLE GLYCEROL PHOSPHATE SYNTHASE SUBUNIT HISF/H IGP SYNTHASE SUBUNIT HISF/H"/>
    <property type="match status" value="1"/>
</dbReference>
<dbReference type="Pfam" id="PF00977">
    <property type="entry name" value="His_biosynth"/>
    <property type="match status" value="1"/>
</dbReference>
<dbReference type="SUPFAM" id="SSF51366">
    <property type="entry name" value="Ribulose-phoshate binding barrel"/>
    <property type="match status" value="1"/>
</dbReference>
<evidence type="ECO:0000255" key="1">
    <source>
        <dbReference type="HAMAP-Rule" id="MF_01013"/>
    </source>
</evidence>
<reference key="1">
    <citation type="journal article" date="2010" name="J. Bacteriol.">
        <title>Complete genome sequence of Beijerinckia indica subsp. indica.</title>
        <authorList>
            <person name="Tamas I."/>
            <person name="Dedysh S.N."/>
            <person name="Liesack W."/>
            <person name="Stott M.B."/>
            <person name="Alam M."/>
            <person name="Murrell J.C."/>
            <person name="Dunfield P.F."/>
        </authorList>
    </citation>
    <scope>NUCLEOTIDE SEQUENCE [LARGE SCALE GENOMIC DNA]</scope>
    <source>
        <strain>ATCC 9039 / DSM 1715 / NCIMB 8712</strain>
    </source>
</reference>
<gene>
    <name evidence="1" type="primary">hisF</name>
    <name type="ordered locus">Bind_0243</name>
</gene>
<comment type="function">
    <text evidence="1">IGPS catalyzes the conversion of PRFAR and glutamine to IGP, AICAR and glutamate. The HisF subunit catalyzes the cyclization activity that produces IGP and AICAR from PRFAR using the ammonia provided by the HisH subunit.</text>
</comment>
<comment type="catalytic activity">
    <reaction evidence="1">
        <text>5-[(5-phospho-1-deoxy-D-ribulos-1-ylimino)methylamino]-1-(5-phospho-beta-D-ribosyl)imidazole-4-carboxamide + L-glutamine = D-erythro-1-(imidazol-4-yl)glycerol 3-phosphate + 5-amino-1-(5-phospho-beta-D-ribosyl)imidazole-4-carboxamide + L-glutamate + H(+)</text>
        <dbReference type="Rhea" id="RHEA:24793"/>
        <dbReference type="ChEBI" id="CHEBI:15378"/>
        <dbReference type="ChEBI" id="CHEBI:29985"/>
        <dbReference type="ChEBI" id="CHEBI:58278"/>
        <dbReference type="ChEBI" id="CHEBI:58359"/>
        <dbReference type="ChEBI" id="CHEBI:58475"/>
        <dbReference type="ChEBI" id="CHEBI:58525"/>
        <dbReference type="EC" id="4.3.2.10"/>
    </reaction>
</comment>
<comment type="pathway">
    <text evidence="1">Amino-acid biosynthesis; L-histidine biosynthesis; L-histidine from 5-phospho-alpha-D-ribose 1-diphosphate: step 5/9.</text>
</comment>
<comment type="subunit">
    <text evidence="1">Heterodimer of HisH and HisF.</text>
</comment>
<comment type="subcellular location">
    <subcellularLocation>
        <location evidence="1">Cytoplasm</location>
    </subcellularLocation>
</comment>
<comment type="similarity">
    <text evidence="1">Belongs to the HisA/HisF family.</text>
</comment>
<organism>
    <name type="scientific">Beijerinckia indica subsp. indica (strain ATCC 9039 / DSM 1715 / NCIMB 8712)</name>
    <dbReference type="NCBI Taxonomy" id="395963"/>
    <lineage>
        <taxon>Bacteria</taxon>
        <taxon>Pseudomonadati</taxon>
        <taxon>Pseudomonadota</taxon>
        <taxon>Alphaproteobacteria</taxon>
        <taxon>Hyphomicrobiales</taxon>
        <taxon>Beijerinckiaceae</taxon>
        <taxon>Beijerinckia</taxon>
    </lineage>
</organism>
<keyword id="KW-0028">Amino-acid biosynthesis</keyword>
<keyword id="KW-0963">Cytoplasm</keyword>
<keyword id="KW-0368">Histidine biosynthesis</keyword>
<keyword id="KW-0456">Lyase</keyword>
<keyword id="KW-1185">Reference proteome</keyword>
<feature type="chain" id="PRO_1000134969" description="Imidazole glycerol phosphate synthase subunit HisF">
    <location>
        <begin position="1"/>
        <end position="276"/>
    </location>
</feature>
<feature type="active site" evidence="1">
    <location>
        <position position="11"/>
    </location>
</feature>
<feature type="active site" evidence="1">
    <location>
        <position position="130"/>
    </location>
</feature>
<name>HIS6_BEII9</name>
<protein>
    <recommendedName>
        <fullName evidence="1">Imidazole glycerol phosphate synthase subunit HisF</fullName>
        <ecNumber evidence="1">4.3.2.10</ecNumber>
    </recommendedName>
    <alternativeName>
        <fullName evidence="1">IGP synthase cyclase subunit</fullName>
    </alternativeName>
    <alternativeName>
        <fullName evidence="1">IGP synthase subunit HisF</fullName>
    </alternativeName>
    <alternativeName>
        <fullName evidence="1">ImGP synthase subunit HisF</fullName>
        <shortName evidence="1">IGPS subunit HisF</shortName>
    </alternativeName>
</protein>
<sequence>MLKARVIPCLDVKDGRVVKGVNFVDLRDAGDPVQCAIAYDAAGADELCFLDITASHEDRGILLDVVERTAAACFMPLTVGGGVRTEDDIRKLLLAGADKVSIMSAAVTDRDFVRRAAEKFGSQCVVVAIDAKEVRPGAWEIFTHGGRKPTGIDAITYARDVAERGAGEILLTSMDRDGTKAGFDLALTRAVSSAVSIPVIASGGVGTLDHLVEGIAQGGAQAVLAASIFHFGTFTIAEAKHYMAQHGLPMRLDTGAAMPPGPFPAPSPPVSPAATG</sequence>